<reference key="1">
    <citation type="journal article" date="1990" name="J. Biol. Chem.">
        <title>Characterization of the lactose-specific enzymes of the phosphotransferase system in Lactococcus lactis.</title>
        <authorList>
            <person name="de Vos W.M."/>
            <person name="Boerrigter I.J."/>
            <person name="van Rooyen R.J."/>
            <person name="Reiche B."/>
            <person name="Hengstenberg W."/>
        </authorList>
    </citation>
    <scope>NUCLEOTIDE SEQUENCE [GENOMIC DNA]</scope>
    <scope>PROTEIN SEQUENCE OF 1-23</scope>
    <scope>FUNCTION</scope>
    <scope>MUTAGENESIS OF GLY-18</scope>
    <scope>SUBUNIT</scope>
    <scope>OPERON STRUCTURE</scope>
    <scope>INDUCTION</scope>
    <source>
        <strain>MG1820</strain>
    </source>
</reference>
<reference key="2">
    <citation type="journal article" date="1991" name="J. Biol. Chem.">
        <title>Molecular cloning, characterization, and nucleotide sequence of the tagatose 6-phosphate pathway gene cluster of the lactose operon of Lactococcus lactis.</title>
        <authorList>
            <person name="van Rooijen R.J."/>
            <person name="van Schalkwijk S."/>
            <person name="de Vos W.M."/>
        </authorList>
    </citation>
    <scope>NUCLEOTIDE SEQUENCE [GENOMIC DNA] OF 1-11</scope>
    <source>
        <strain>MG1820</strain>
    </source>
</reference>
<reference key="3">
    <citation type="journal article" date="1997" name="Structure">
        <title>The structure of enzyme IIAlactose from Lactococcus lactis reveals a new fold and points to possible interactions of a multicomponent system.</title>
        <authorList>
            <person name="Sliz P."/>
            <person name="Engelmann R."/>
            <person name="Hengstenberg W."/>
            <person name="Pai E.F."/>
        </authorList>
    </citation>
    <scope>X-RAY CRYSTALLOGRAPHY (2.3 ANGSTROMS) IN COMPLEX WITH MAGNESIUM ION</scope>
    <scope>COFACTOR</scope>
    <scope>ACTIVE SITE</scope>
    <scope>PHOSPHORYLATION AT HIS-78</scope>
    <scope>SUBUNIT</scope>
</reference>
<reference key="4">
    <citation type="submission" date="1999-05" db="PDB data bank">
        <title>Structure of Asp81Leu Enzyme IIa from the Lactose specific PTS from Lactococcus lactis.</title>
        <authorList>
            <person name="Sliz P."/>
            <person name="Koch B."/>
            <person name="Hengstenberg W."/>
            <person name="Pai E.F."/>
        </authorList>
    </citation>
    <scope>X-RAY CRYSTALLOGRAPHY (2.10 ANGSTROMS)</scope>
    <scope>SUBUNIT</scope>
</reference>
<dbReference type="EMBL" id="M60447">
    <property type="protein sequence ID" value="AAA25181.1"/>
    <property type="molecule type" value="Genomic_DNA"/>
</dbReference>
<dbReference type="EMBL" id="M65190">
    <property type="status" value="NOT_ANNOTATED_CDS"/>
    <property type="molecule type" value="Genomic_DNA"/>
</dbReference>
<dbReference type="PIR" id="A23696">
    <property type="entry name" value="A23696"/>
</dbReference>
<dbReference type="RefSeq" id="WP_014011534.1">
    <property type="nucleotide sequence ID" value="NZ_WJUU01000033.1"/>
</dbReference>
<dbReference type="RefSeq" id="YP_004761516.1">
    <property type="nucleotide sequence ID" value="NC_015862.1"/>
</dbReference>
<dbReference type="PDB" id="1E2A">
    <property type="method" value="X-ray"/>
    <property type="resolution" value="2.30 A"/>
    <property type="chains" value="A/B/C=1-105"/>
</dbReference>
<dbReference type="PDB" id="2E2A">
    <property type="method" value="X-ray"/>
    <property type="resolution" value="2.10 A"/>
    <property type="chains" value="A/B/C=1-105"/>
</dbReference>
<dbReference type="PDBsum" id="1E2A"/>
<dbReference type="PDBsum" id="2E2A"/>
<dbReference type="SMR" id="P23532"/>
<dbReference type="iPTMnet" id="P23532"/>
<dbReference type="EvolutionaryTrace" id="P23532"/>
<dbReference type="GO" id="GO:0005737">
    <property type="term" value="C:cytoplasm"/>
    <property type="evidence" value="ECO:0007669"/>
    <property type="project" value="UniProtKB-SubCell"/>
</dbReference>
<dbReference type="GO" id="GO:0046872">
    <property type="term" value="F:metal ion binding"/>
    <property type="evidence" value="ECO:0007669"/>
    <property type="project" value="UniProtKB-KW"/>
</dbReference>
<dbReference type="GO" id="GO:0016740">
    <property type="term" value="F:transferase activity"/>
    <property type="evidence" value="ECO:0007669"/>
    <property type="project" value="UniProtKB-KW"/>
</dbReference>
<dbReference type="GO" id="GO:0009401">
    <property type="term" value="P:phosphoenolpyruvate-dependent sugar phosphotransferase system"/>
    <property type="evidence" value="ECO:0007669"/>
    <property type="project" value="UniProtKB-KW"/>
</dbReference>
<dbReference type="CDD" id="cd00215">
    <property type="entry name" value="PTS_IIA_lac"/>
    <property type="match status" value="1"/>
</dbReference>
<dbReference type="Gene3D" id="1.20.58.80">
    <property type="entry name" value="Phosphotransferase system, lactose/cellobiose-type IIA subunit"/>
    <property type="match status" value="1"/>
</dbReference>
<dbReference type="InterPro" id="IPR003188">
    <property type="entry name" value="PTS_IIA_lac/cel"/>
</dbReference>
<dbReference type="InterPro" id="IPR036542">
    <property type="entry name" value="PTS_IIA_lac/cel_sf"/>
</dbReference>
<dbReference type="NCBIfam" id="TIGR00823">
    <property type="entry name" value="EIIA-LAC"/>
    <property type="match status" value="1"/>
</dbReference>
<dbReference type="PANTHER" id="PTHR34382:SF9">
    <property type="entry name" value="PHOSPHOTRANSFERASE SYSTEM SUGAR-SPECIFIC EII COMPONENT"/>
    <property type="match status" value="1"/>
</dbReference>
<dbReference type="PANTHER" id="PTHR34382">
    <property type="entry name" value="PTS SYSTEM N,N'-DIACETYLCHITOBIOSE-SPECIFIC EIIA COMPONENT"/>
    <property type="match status" value="1"/>
</dbReference>
<dbReference type="Pfam" id="PF02255">
    <property type="entry name" value="PTS_IIA"/>
    <property type="match status" value="1"/>
</dbReference>
<dbReference type="PIRSF" id="PIRSF000699">
    <property type="entry name" value="PTS_IILac_III"/>
    <property type="match status" value="1"/>
</dbReference>
<dbReference type="SUPFAM" id="SSF46973">
    <property type="entry name" value="Enzyme IIa from lactose specific PTS, IIa-lac"/>
    <property type="match status" value="1"/>
</dbReference>
<dbReference type="PROSITE" id="PS51095">
    <property type="entry name" value="PTS_EIIA_TYPE_3"/>
    <property type="match status" value="1"/>
</dbReference>
<proteinExistence type="evidence at protein level"/>
<keyword id="KW-0002">3D-structure</keyword>
<keyword id="KW-0963">Cytoplasm</keyword>
<keyword id="KW-0903">Direct protein sequencing</keyword>
<keyword id="KW-0460">Magnesium</keyword>
<keyword id="KW-0479">Metal-binding</keyword>
<keyword id="KW-0597">Phosphoprotein</keyword>
<keyword id="KW-0598">Phosphotransferase system</keyword>
<keyword id="KW-0614">Plasmid</keyword>
<keyword id="KW-0762">Sugar transport</keyword>
<keyword id="KW-0808">Transferase</keyword>
<keyword id="KW-0813">Transport</keyword>
<comment type="function">
    <text evidence="7">The phosphoenolpyruvate-dependent sugar phosphotransferase system (sugar PTS), a major carbohydrate active transport system, catalyzes the phosphorylation of incoming sugar substrates concomitantly with their translocation across the cell membrane. The enzyme II LacEF PTS system is involved in lactose transport.</text>
</comment>
<comment type="cofactor">
    <cofactor evidence="3">
        <name>Mg(2+)</name>
        <dbReference type="ChEBI" id="CHEBI:18420"/>
    </cofactor>
    <text evidence="3">Binds 1 Mg(2+) ion per trimer.</text>
</comment>
<comment type="subunit">
    <text evidence="2 3 4">Homotrimer.</text>
</comment>
<comment type="subcellular location">
    <subcellularLocation>
        <location evidence="6">Cytoplasm</location>
    </subcellularLocation>
</comment>
<comment type="induction">
    <text evidence="2">By lactose. The operon consists of lacABCDFEGX. A second transcript of only lacF and lacE is also lactose-induced.</text>
</comment>
<comment type="domain">
    <text evidence="1">The PTS EIIA type-3 domain is phosphorylated by phospho-HPr on a histidyl residue. Then, it transfers the phosphoryl group to the PTS EIIB type-3 domain.</text>
</comment>
<comment type="miscellaneous">
    <text evidence="2">This gene was sequenced from pMG820, a laboratory-derived deletion of the naturally occurring plasmid pLP712.</text>
</comment>
<accession>P23532</accession>
<sequence>MNREEMTLLGFEIVAYAGDARSKLLEALKAAENGDFAKADSLVVEAGSCIAEAHSSQTGMLAREASGEELPYSVTMMHGQDHLMTTILLKDVIHHLIELYKRGAK</sequence>
<name>PTLA_LACLL</name>
<organism>
    <name type="scientific">Lactococcus lactis subsp. lactis</name>
    <name type="common">Streptococcus lactis</name>
    <dbReference type="NCBI Taxonomy" id="1360"/>
    <lineage>
        <taxon>Bacteria</taxon>
        <taxon>Bacillati</taxon>
        <taxon>Bacillota</taxon>
        <taxon>Bacilli</taxon>
        <taxon>Lactobacillales</taxon>
        <taxon>Streptococcaceae</taxon>
        <taxon>Lactococcus</taxon>
    </lineage>
</organism>
<geneLocation type="plasmid">
    <name>pLP712</name>
</geneLocation>
<gene>
    <name evidence="5" type="primary">lacF</name>
</gene>
<protein>
    <recommendedName>
        <fullName evidence="5">PTS system lactose-specific EIIA component</fullName>
    </recommendedName>
    <alternativeName>
        <fullName evidence="5">EIIA-Lac</fullName>
    </alternativeName>
    <alternativeName>
        <fullName evidence="5">EIII-Lac</fullName>
    </alternativeName>
    <alternativeName>
        <fullName evidence="5">Lactose-specific phosphotransferase enzyme IIA component</fullName>
    </alternativeName>
</protein>
<feature type="chain" id="PRO_0000186597" description="PTS system lactose-specific EIIA component">
    <location>
        <begin position="1"/>
        <end position="105"/>
    </location>
</feature>
<feature type="domain" description="PTS EIIA type-3" evidence="1">
    <location>
        <begin position="4"/>
        <end position="102"/>
    </location>
</feature>
<feature type="active site" description="Tele-phosphohistidine intermediate" evidence="8">
    <location>
        <position position="78"/>
    </location>
</feature>
<feature type="binding site" evidence="3">
    <location>
        <position position="81"/>
    </location>
    <ligand>
        <name>Mg(2+)</name>
        <dbReference type="ChEBI" id="CHEBI:18420"/>
        <note>ligand shared between all trimeric partners</note>
    </ligand>
</feature>
<feature type="modified residue" description="Phosphohistidine; by HPr" evidence="1 8">
    <location>
        <position position="78"/>
    </location>
</feature>
<feature type="mutagenesis site" description="No activity." evidence="2">
    <original>G</original>
    <variation>E</variation>
    <location>
        <position position="18"/>
    </location>
</feature>
<feature type="helix" evidence="9">
    <location>
        <begin position="3"/>
        <end position="32"/>
    </location>
</feature>
<feature type="helix" evidence="9">
    <location>
        <begin position="36"/>
        <end position="65"/>
    </location>
</feature>
<feature type="helix" evidence="9">
    <location>
        <begin position="74"/>
        <end position="103"/>
    </location>
</feature>
<evidence type="ECO:0000255" key="1">
    <source>
        <dbReference type="PROSITE-ProRule" id="PRU00418"/>
    </source>
</evidence>
<evidence type="ECO:0000269" key="2">
    <source>
    </source>
</evidence>
<evidence type="ECO:0000269" key="3">
    <source>
    </source>
</evidence>
<evidence type="ECO:0000269" key="4">
    <source ref="4"/>
</evidence>
<evidence type="ECO:0000303" key="5">
    <source>
    </source>
</evidence>
<evidence type="ECO:0000305" key="6"/>
<evidence type="ECO:0000305" key="7">
    <source>
    </source>
</evidence>
<evidence type="ECO:0000305" key="8">
    <source>
    </source>
</evidence>
<evidence type="ECO:0007829" key="9">
    <source>
        <dbReference type="PDB" id="2E2A"/>
    </source>
</evidence>